<evidence type="ECO:0000250" key="1"/>
<evidence type="ECO:0000250" key="2">
    <source>
        <dbReference type="UniProtKB" id="O94992"/>
    </source>
</evidence>
<evidence type="ECO:0000250" key="3">
    <source>
        <dbReference type="UniProtKB" id="Q8R409"/>
    </source>
</evidence>
<evidence type="ECO:0000255" key="4"/>
<evidence type="ECO:0000256" key="5">
    <source>
        <dbReference type="SAM" id="MobiDB-lite"/>
    </source>
</evidence>
<evidence type="ECO:0000305" key="6"/>
<organism>
    <name type="scientific">Bos taurus</name>
    <name type="common">Bovine</name>
    <dbReference type="NCBI Taxonomy" id="9913"/>
    <lineage>
        <taxon>Eukaryota</taxon>
        <taxon>Metazoa</taxon>
        <taxon>Chordata</taxon>
        <taxon>Craniata</taxon>
        <taxon>Vertebrata</taxon>
        <taxon>Euteleostomi</taxon>
        <taxon>Mammalia</taxon>
        <taxon>Eutheria</taxon>
        <taxon>Laurasiatheria</taxon>
        <taxon>Artiodactyla</taxon>
        <taxon>Ruminantia</taxon>
        <taxon>Pecora</taxon>
        <taxon>Bovidae</taxon>
        <taxon>Bovinae</taxon>
        <taxon>Bos</taxon>
    </lineage>
</organism>
<accession>Q0X0C4</accession>
<sequence length="320" mass="36317">MAEPLLSEFQHQPQTSNCTGAVAVHEERNPDRPPGAEERVPEEDSRWQSRASPKSGGSPGHGGEGSLEPQPSPLKTQVCPESSCPEAGEKGQNGDDLSAGGAPPQQRQVGKKKHRRRPSKKKRLWKPYYTLTWEEKKKFDEKQSLRASRIRAEMFAKGQPVAPYNTTQFLMDDHDQEEPDLKTGLYPKRAAAKSDDTSDEDFMEEAGEEDGGSDGMGGDGSEFLQRDFSETYERYHAESLQNMSKQELIKEYLELEKCLSRMEDENNRLRLESQRLDGDDARVRELELELDRLRAENLQLLTENELHRQQERAPLSNFGD</sequence>
<keyword id="KW-0175">Coiled coil</keyword>
<keyword id="KW-0963">Cytoplasm</keyword>
<keyword id="KW-0391">Immunity</keyword>
<keyword id="KW-0399">Innate immunity</keyword>
<keyword id="KW-0539">Nucleus</keyword>
<keyword id="KW-0597">Phosphoprotein</keyword>
<keyword id="KW-1185">Reference proteome</keyword>
<keyword id="KW-0678">Repressor</keyword>
<keyword id="KW-0804">Transcription</keyword>
<keyword id="KW-0805">Transcription regulation</keyword>
<reference key="1">
    <citation type="submission" date="2005-02" db="EMBL/GenBank/DDBJ databases">
        <title>Cloning and expression of L3 in bovine ovarian follicles.</title>
        <authorList>
            <person name="Kaneyama K."/>
            <person name="Ushizawa K."/>
            <person name="Takahashi T."/>
            <person name="Hashizume K."/>
        </authorList>
    </citation>
    <scope>NUCLEOTIDE SEQUENCE [MRNA]</scope>
    <source>
        <tissue>Ovary</tissue>
    </source>
</reference>
<reference key="2">
    <citation type="submission" date="2006-08" db="EMBL/GenBank/DDBJ databases">
        <authorList>
            <consortium name="NIH - Mammalian Gene Collection (MGC) project"/>
        </authorList>
    </citation>
    <scope>NUCLEOTIDE SEQUENCE [LARGE SCALE MRNA]</scope>
    <source>
        <strain>Hereford</strain>
        <tissue>Basal ganglia</tissue>
    </source>
</reference>
<comment type="function">
    <text evidence="2">Transcriptional regulator which functions as a general RNA polymerase II transcription inhibitor. Core component of the 7SK RNP complex: in cooperation with 7SK snRNA sequesters P-TEFb in a large inactive 7SK snRNP complex preventing RNA polymerase II phosphorylation and subsequent transcriptional elongation. May also regulate NF-kappa-B, ESR1, NR3C1 and CIITA-dependent transcriptional activity. Plays a role in the regulation of DNA virus-mediated innate immune response by assembling into the HDP-RNP complex, a complex that serves as a platform for IRF3 phosphorylation and subsequent innate immune response activation through the cGAS-STING pathway.</text>
</comment>
<comment type="subunit">
    <text evidence="2">Homooligomer and heterooligomer with HEXIM2; probably dimeric. Core component of the 7SK RNP complex, at least composed of 7SK RNA, LARP7, MEPCE, HEXIM1 (or HEXIM2) and P-TEFb (composed of CDK9 and CCNT1/cyclin-T1). Interacts with the N-CoR complex through NCOR1. Interacts with ESR1 and NR3C1. May interact with NF-kappa-B through RELA. Interacts with CCNT2; mediates formation of a tripartite complex with KPNA2. Part of the HDP-RNP complex composed of at least HEXIM1, PRKDC, XRCC5, XRCC6, paraspeckle proteins (SFPQ, NONO, PSPC1, RBM14, and MATR3) and NEAT1 non-coding RNA.</text>
</comment>
<comment type="subcellular location">
    <subcellularLocation>
        <location evidence="2">Nucleus</location>
    </subcellularLocation>
    <subcellularLocation>
        <location evidence="2">Cytoplasm</location>
    </subcellularLocation>
    <text evidence="2">Binds alpha-importin and is mostly nuclear.</text>
</comment>
<comment type="domain">
    <text evidence="1">The coiled-coil domain mediates oligomerization.</text>
</comment>
<comment type="similarity">
    <text evidence="6">Belongs to the HEXIM family.</text>
</comment>
<name>HEXI1_BOVIN</name>
<feature type="chain" id="PRO_0000305262" description="Protein HEXIM1">
    <location>
        <begin position="1"/>
        <end position="320"/>
    </location>
</feature>
<feature type="region of interest" description="Disordered" evidence="5">
    <location>
        <begin position="1"/>
        <end position="124"/>
    </location>
</feature>
<feature type="region of interest" description="Basic region; mediates nuclear localization and interaction with 7SK snRNA and NR3C1" evidence="1">
    <location>
        <begin position="111"/>
        <end position="138"/>
    </location>
</feature>
<feature type="region of interest" description="Interaction with P-TEFb" evidence="1">
    <location>
        <begin position="163"/>
        <end position="166"/>
    </location>
</feature>
<feature type="region of interest" description="Autoinhibitory acidic region; in absence of 7SK snRNA interacts with the basic region preventing interaction with P-TEFb and modulating subcellular localization" evidence="1">
    <location>
        <begin position="171"/>
        <end position="211"/>
    </location>
</feature>
<feature type="region of interest" description="Disordered" evidence="5">
    <location>
        <begin position="174"/>
        <end position="223"/>
    </location>
</feature>
<feature type="region of interest" description="Mediates interaction with CCNT1" evidence="1">
    <location>
        <begin position="247"/>
        <end position="275"/>
    </location>
</feature>
<feature type="region of interest" description="Required for inhibition of ESR1-dependent transcription" evidence="1">
    <location>
        <begin position="271"/>
        <end position="316"/>
    </location>
</feature>
<feature type="coiled-coil region" evidence="4">
    <location>
        <begin position="244"/>
        <end position="310"/>
    </location>
</feature>
<feature type="compositionally biased region" description="Polar residues" evidence="5">
    <location>
        <begin position="9"/>
        <end position="19"/>
    </location>
</feature>
<feature type="compositionally biased region" description="Basic and acidic residues" evidence="5">
    <location>
        <begin position="24"/>
        <end position="47"/>
    </location>
</feature>
<feature type="compositionally biased region" description="Basic residues" evidence="5">
    <location>
        <begin position="109"/>
        <end position="124"/>
    </location>
</feature>
<feature type="compositionally biased region" description="Acidic residues" evidence="5">
    <location>
        <begin position="197"/>
        <end position="212"/>
    </location>
</feature>
<feature type="modified residue" description="Phosphoserine" evidence="2">
    <location>
        <position position="98"/>
    </location>
</feature>
<feature type="modified residue" description="Phosphoserine" evidence="2">
    <location>
        <position position="194"/>
    </location>
</feature>
<feature type="modified residue" description="Phosphothreonine" evidence="2">
    <location>
        <position position="197"/>
    </location>
</feature>
<feature type="modified residue" description="Phosphoserine" evidence="2">
    <location>
        <position position="198"/>
    </location>
</feature>
<feature type="modified residue" description="Phosphoserine" evidence="2">
    <location>
        <position position="213"/>
    </location>
</feature>
<feature type="modified residue" description="Phosphoserine" evidence="3">
    <location>
        <position position="221"/>
    </location>
</feature>
<dbReference type="EMBL" id="AB205339">
    <property type="protein sequence ID" value="BAF02382.1"/>
    <property type="molecule type" value="mRNA"/>
</dbReference>
<dbReference type="EMBL" id="BC120426">
    <property type="protein sequence ID" value="AAI20427.1"/>
    <property type="molecule type" value="mRNA"/>
</dbReference>
<dbReference type="RefSeq" id="NP_001069649.1">
    <property type="nucleotide sequence ID" value="NM_001076181.2"/>
</dbReference>
<dbReference type="SMR" id="Q0X0C4"/>
<dbReference type="FunCoup" id="Q0X0C4">
    <property type="interactions" value="1867"/>
</dbReference>
<dbReference type="STRING" id="9913.ENSBTAP00000007955"/>
<dbReference type="PaxDb" id="9913-ENSBTAP00000007955"/>
<dbReference type="Ensembl" id="ENSBTAT00000007955.5">
    <property type="protein sequence ID" value="ENSBTAP00000007955.3"/>
    <property type="gene ID" value="ENSBTAG00000006056.5"/>
</dbReference>
<dbReference type="GeneID" id="539696"/>
<dbReference type="KEGG" id="bta:539696"/>
<dbReference type="CTD" id="10614"/>
<dbReference type="VEuPathDB" id="HostDB:ENSBTAG00000006056"/>
<dbReference type="VGNC" id="VGNC:29826">
    <property type="gene designation" value="HEXIM1"/>
</dbReference>
<dbReference type="eggNOG" id="ENOG502QQP8">
    <property type="taxonomic scope" value="Eukaryota"/>
</dbReference>
<dbReference type="GeneTree" id="ENSGT00390000002808"/>
<dbReference type="HOGENOM" id="CLU_066028_0_0_1"/>
<dbReference type="InParanoid" id="Q0X0C4"/>
<dbReference type="OMA" id="YTLTWEE"/>
<dbReference type="OrthoDB" id="10058500at2759"/>
<dbReference type="TreeFam" id="TF336851"/>
<dbReference type="Proteomes" id="UP000009136">
    <property type="component" value="Chromosome 19"/>
</dbReference>
<dbReference type="Bgee" id="ENSBTAG00000006056">
    <property type="expression patterns" value="Expressed in myometrium and 103 other cell types or tissues"/>
</dbReference>
<dbReference type="GO" id="GO:0120259">
    <property type="term" value="C:7SK snRNP"/>
    <property type="evidence" value="ECO:0007669"/>
    <property type="project" value="Ensembl"/>
</dbReference>
<dbReference type="GO" id="GO:0005737">
    <property type="term" value="C:cytoplasm"/>
    <property type="evidence" value="ECO:0000318"/>
    <property type="project" value="GO_Central"/>
</dbReference>
<dbReference type="GO" id="GO:0005654">
    <property type="term" value="C:nucleoplasm"/>
    <property type="evidence" value="ECO:0000318"/>
    <property type="project" value="GO_Central"/>
</dbReference>
<dbReference type="GO" id="GO:0097322">
    <property type="term" value="F:7SK snRNA binding"/>
    <property type="evidence" value="ECO:0000250"/>
    <property type="project" value="UniProtKB"/>
</dbReference>
<dbReference type="GO" id="GO:0004861">
    <property type="term" value="F:cyclin-dependent protein serine/threonine kinase inhibitor activity"/>
    <property type="evidence" value="ECO:0000318"/>
    <property type="project" value="GO_Central"/>
</dbReference>
<dbReference type="GO" id="GO:0042802">
    <property type="term" value="F:identical protein binding"/>
    <property type="evidence" value="ECO:0007669"/>
    <property type="project" value="Ensembl"/>
</dbReference>
<dbReference type="GO" id="GO:0106140">
    <property type="term" value="F:P-TEFb complex binding"/>
    <property type="evidence" value="ECO:0007669"/>
    <property type="project" value="Ensembl"/>
</dbReference>
<dbReference type="GO" id="GO:0140416">
    <property type="term" value="F:transcription regulator inhibitor activity"/>
    <property type="evidence" value="ECO:0007669"/>
    <property type="project" value="Ensembl"/>
</dbReference>
<dbReference type="GO" id="GO:0002218">
    <property type="term" value="P:activation of innate immune response"/>
    <property type="evidence" value="ECO:0007669"/>
    <property type="project" value="Ensembl"/>
</dbReference>
<dbReference type="GO" id="GO:0007507">
    <property type="term" value="P:heart development"/>
    <property type="evidence" value="ECO:0007669"/>
    <property type="project" value="Ensembl"/>
</dbReference>
<dbReference type="GO" id="GO:0045087">
    <property type="term" value="P:innate immune response"/>
    <property type="evidence" value="ECO:0007669"/>
    <property type="project" value="UniProtKB-KW"/>
</dbReference>
<dbReference type="GO" id="GO:0000122">
    <property type="term" value="P:negative regulation of transcription by RNA polymerase II"/>
    <property type="evidence" value="ECO:0000318"/>
    <property type="project" value="GO_Central"/>
</dbReference>
<dbReference type="GO" id="GO:0034244">
    <property type="term" value="P:negative regulation of transcription elongation by RNA polymerase II"/>
    <property type="evidence" value="ECO:0007669"/>
    <property type="project" value="Ensembl"/>
</dbReference>
<dbReference type="GO" id="GO:0032897">
    <property type="term" value="P:negative regulation of viral transcription"/>
    <property type="evidence" value="ECO:0007669"/>
    <property type="project" value="Ensembl"/>
</dbReference>
<dbReference type="GO" id="GO:1901798">
    <property type="term" value="P:positive regulation of signal transduction by p53 class mediator"/>
    <property type="evidence" value="ECO:0007669"/>
    <property type="project" value="Ensembl"/>
</dbReference>
<dbReference type="Gene3D" id="6.10.250.2910">
    <property type="match status" value="1"/>
</dbReference>
<dbReference type="InterPro" id="IPR024872">
    <property type="entry name" value="HEXIM"/>
</dbReference>
<dbReference type="PANTHER" id="PTHR13469">
    <property type="entry name" value="HEXAMETHYLENE BISACETAMIDE INDUCIBLE 1"/>
    <property type="match status" value="1"/>
</dbReference>
<dbReference type="PANTHER" id="PTHR13469:SF7">
    <property type="entry name" value="PROTEIN HEXIM1"/>
    <property type="match status" value="1"/>
</dbReference>
<dbReference type="Pfam" id="PF15313">
    <property type="entry name" value="HEXIM"/>
    <property type="match status" value="1"/>
</dbReference>
<dbReference type="PRINTS" id="PR02094">
    <property type="entry name" value="HEXIMFAMILY"/>
</dbReference>
<gene>
    <name type="primary">HEXIM1</name>
</gene>
<proteinExistence type="evidence at transcript level"/>
<protein>
    <recommendedName>
        <fullName>Protein HEXIM1</fullName>
    </recommendedName>
</protein>